<comment type="function">
    <text evidence="1">DNA ligase that catalyzes the formation of phosphodiester linkages between 5'-phosphoryl and 3'-hydroxyl groups in double-stranded DNA using NAD as a coenzyme and as the energy source for the reaction. It is essential for DNA replication and repair of damaged DNA.</text>
</comment>
<comment type="catalytic activity">
    <reaction evidence="1">
        <text>NAD(+) + (deoxyribonucleotide)n-3'-hydroxyl + 5'-phospho-(deoxyribonucleotide)m = (deoxyribonucleotide)n+m + AMP + beta-nicotinamide D-nucleotide.</text>
        <dbReference type="EC" id="6.5.1.2"/>
    </reaction>
</comment>
<comment type="cofactor">
    <cofactor evidence="1">
        <name>Mg(2+)</name>
        <dbReference type="ChEBI" id="CHEBI:18420"/>
    </cofactor>
    <cofactor evidence="1">
        <name>Mn(2+)</name>
        <dbReference type="ChEBI" id="CHEBI:29035"/>
    </cofactor>
</comment>
<comment type="similarity">
    <text evidence="1">Belongs to the NAD-dependent DNA ligase family. LigA subfamily.</text>
</comment>
<name>DNLJ_UREP2</name>
<gene>
    <name evidence="1" type="primary">ligA</name>
    <name type="ordered locus">UPA3_0127</name>
</gene>
<sequence>MDKIKAKIDELKQKLDQWNYEYYVLDDPSVPDHVYDQTMRELIELENNYPQFKTNNSPSVKVGGFVSEKFNKVKHKRPMLSLSNAFNDDDLKKFDQDNQNASVDLKGYVVEPKIDGLSISIIYKNAKLHQAITRGDGINGEDVTSNILTIKDIPHYIDQKYKDYEIEVRGEVYMAFHDFYEMNDNLEESDKKFANPRNAAAGTLRSLDNSIVAERKLSAFMYYLVNAQELGIKTHYESIQFLRDNKFKVSDLIVKVDTINEVINQIDCYTKVRDKLSYMIDGIVIKINNLEVYDEIGYTSKFPKWAIAYKFPANVVSSQLLEIINDVGRTGKISYVAKIKPILLDGSMVEYATLHNFDFIKEKDIRINDEIKIYKAGDVIPYVDGVDLSKRLANSVPYEPIINCPSCQSVLVRENDEVDQRCLNIYGCKKINIEKIVYFVSRNCMNIEGMSDAIINKFYDANLIKNIADLYYLQKHKEFILTSDFKIKEKSFSNLINSINNSKKCSLEFLLTAFGIRHVGPNLAKKIAKQFKTMTALMHANFDELTNVDACGEKAALSLINWFNDEHNVSLVNQLQQVGVNMEYIDDFIYDDNINIIDEYKNKTFVITGSFSISRDEIKTILEKYYHAKVKNSVSKKTDYVLVGTEAGTKLEKAKLLGVKIIENEFWKKDNNF</sequence>
<feature type="chain" id="PRO_0000380502" description="DNA ligase">
    <location>
        <begin position="1"/>
        <end position="673"/>
    </location>
</feature>
<feature type="domain" description="BRCT" evidence="1">
    <location>
        <begin position="595"/>
        <end position="673"/>
    </location>
</feature>
<feature type="active site" description="N6-AMP-lysine intermediate" evidence="1">
    <location>
        <position position="113"/>
    </location>
</feature>
<feature type="binding site" evidence="1">
    <location>
        <begin position="32"/>
        <end position="36"/>
    </location>
    <ligand>
        <name>NAD(+)</name>
        <dbReference type="ChEBI" id="CHEBI:57540"/>
    </ligand>
</feature>
<feature type="binding site" evidence="1">
    <location>
        <begin position="81"/>
        <end position="82"/>
    </location>
    <ligand>
        <name>NAD(+)</name>
        <dbReference type="ChEBI" id="CHEBI:57540"/>
    </ligand>
</feature>
<feature type="binding site" evidence="1">
    <location>
        <position position="111"/>
    </location>
    <ligand>
        <name>NAD(+)</name>
        <dbReference type="ChEBI" id="CHEBI:57540"/>
    </ligand>
</feature>
<feature type="binding site" evidence="1">
    <location>
        <position position="134"/>
    </location>
    <ligand>
        <name>NAD(+)</name>
        <dbReference type="ChEBI" id="CHEBI:57540"/>
    </ligand>
</feature>
<feature type="binding site" evidence="1">
    <location>
        <position position="171"/>
    </location>
    <ligand>
        <name>NAD(+)</name>
        <dbReference type="ChEBI" id="CHEBI:57540"/>
    </ligand>
</feature>
<feature type="binding site" evidence="1">
    <location>
        <position position="286"/>
    </location>
    <ligand>
        <name>NAD(+)</name>
        <dbReference type="ChEBI" id="CHEBI:57540"/>
    </ligand>
</feature>
<feature type="binding site" evidence="1">
    <location>
        <position position="310"/>
    </location>
    <ligand>
        <name>NAD(+)</name>
        <dbReference type="ChEBI" id="CHEBI:57540"/>
    </ligand>
</feature>
<feature type="binding site" evidence="1">
    <location>
        <position position="404"/>
    </location>
    <ligand>
        <name>Zn(2+)</name>
        <dbReference type="ChEBI" id="CHEBI:29105"/>
    </ligand>
</feature>
<feature type="binding site" evidence="1">
    <location>
        <position position="407"/>
    </location>
    <ligand>
        <name>Zn(2+)</name>
        <dbReference type="ChEBI" id="CHEBI:29105"/>
    </ligand>
</feature>
<feature type="binding site" evidence="1">
    <location>
        <position position="422"/>
    </location>
    <ligand>
        <name>Zn(2+)</name>
        <dbReference type="ChEBI" id="CHEBI:29105"/>
    </ligand>
</feature>
<feature type="binding site" evidence="1">
    <location>
        <position position="428"/>
    </location>
    <ligand>
        <name>Zn(2+)</name>
        <dbReference type="ChEBI" id="CHEBI:29105"/>
    </ligand>
</feature>
<evidence type="ECO:0000255" key="1">
    <source>
        <dbReference type="HAMAP-Rule" id="MF_01588"/>
    </source>
</evidence>
<dbReference type="EC" id="6.5.1.2" evidence="1"/>
<dbReference type="EMBL" id="CP000942">
    <property type="protein sequence ID" value="ACA33058.1"/>
    <property type="molecule type" value="Genomic_DNA"/>
</dbReference>
<dbReference type="RefSeq" id="WP_006689158.1">
    <property type="nucleotide sequence ID" value="NC_010503.1"/>
</dbReference>
<dbReference type="SMR" id="B1AIB0"/>
<dbReference type="GeneID" id="29672169"/>
<dbReference type="KEGG" id="upa:UPA3_0127"/>
<dbReference type="HOGENOM" id="CLU_007764_2_1_14"/>
<dbReference type="Proteomes" id="UP000002162">
    <property type="component" value="Chromosome"/>
</dbReference>
<dbReference type="GO" id="GO:0005829">
    <property type="term" value="C:cytosol"/>
    <property type="evidence" value="ECO:0007669"/>
    <property type="project" value="TreeGrafter"/>
</dbReference>
<dbReference type="GO" id="GO:0003911">
    <property type="term" value="F:DNA ligase (NAD+) activity"/>
    <property type="evidence" value="ECO:0007669"/>
    <property type="project" value="UniProtKB-UniRule"/>
</dbReference>
<dbReference type="GO" id="GO:0046872">
    <property type="term" value="F:metal ion binding"/>
    <property type="evidence" value="ECO:0007669"/>
    <property type="project" value="UniProtKB-KW"/>
</dbReference>
<dbReference type="GO" id="GO:0006281">
    <property type="term" value="P:DNA repair"/>
    <property type="evidence" value="ECO:0007669"/>
    <property type="project" value="UniProtKB-KW"/>
</dbReference>
<dbReference type="GO" id="GO:0006260">
    <property type="term" value="P:DNA replication"/>
    <property type="evidence" value="ECO:0007669"/>
    <property type="project" value="UniProtKB-KW"/>
</dbReference>
<dbReference type="CDD" id="cd17748">
    <property type="entry name" value="BRCT_DNA_ligase_like"/>
    <property type="match status" value="1"/>
</dbReference>
<dbReference type="CDD" id="cd00114">
    <property type="entry name" value="LIGANc"/>
    <property type="match status" value="1"/>
</dbReference>
<dbReference type="FunFam" id="1.10.287.610:FF:000002">
    <property type="entry name" value="DNA ligase"/>
    <property type="match status" value="1"/>
</dbReference>
<dbReference type="Gene3D" id="6.20.10.30">
    <property type="match status" value="1"/>
</dbReference>
<dbReference type="Gene3D" id="1.10.150.20">
    <property type="entry name" value="5' to 3' exonuclease, C-terminal subdomain"/>
    <property type="match status" value="2"/>
</dbReference>
<dbReference type="Gene3D" id="3.40.50.10190">
    <property type="entry name" value="BRCT domain"/>
    <property type="match status" value="1"/>
</dbReference>
<dbReference type="Gene3D" id="3.30.470.30">
    <property type="entry name" value="DNA ligase/mRNA capping enzyme"/>
    <property type="match status" value="1"/>
</dbReference>
<dbReference type="Gene3D" id="1.10.287.610">
    <property type="entry name" value="Helix hairpin bin"/>
    <property type="match status" value="1"/>
</dbReference>
<dbReference type="Gene3D" id="2.40.50.140">
    <property type="entry name" value="Nucleic acid-binding proteins"/>
    <property type="match status" value="1"/>
</dbReference>
<dbReference type="HAMAP" id="MF_01588">
    <property type="entry name" value="DNA_ligase_A"/>
    <property type="match status" value="1"/>
</dbReference>
<dbReference type="InterPro" id="IPR001357">
    <property type="entry name" value="BRCT_dom"/>
</dbReference>
<dbReference type="InterPro" id="IPR036420">
    <property type="entry name" value="BRCT_dom_sf"/>
</dbReference>
<dbReference type="InterPro" id="IPR041663">
    <property type="entry name" value="DisA/LigA_HHH"/>
</dbReference>
<dbReference type="InterPro" id="IPR001679">
    <property type="entry name" value="DNA_ligase"/>
</dbReference>
<dbReference type="InterPro" id="IPR013839">
    <property type="entry name" value="DNAligase_adenylation"/>
</dbReference>
<dbReference type="InterPro" id="IPR013840">
    <property type="entry name" value="DNAligase_N"/>
</dbReference>
<dbReference type="InterPro" id="IPR012340">
    <property type="entry name" value="NA-bd_OB-fold"/>
</dbReference>
<dbReference type="InterPro" id="IPR004150">
    <property type="entry name" value="NAD_DNA_ligase_OB"/>
</dbReference>
<dbReference type="InterPro" id="IPR010994">
    <property type="entry name" value="RuvA_2-like"/>
</dbReference>
<dbReference type="InterPro" id="IPR004149">
    <property type="entry name" value="Znf_DNAligase_C4"/>
</dbReference>
<dbReference type="NCBIfam" id="TIGR00575">
    <property type="entry name" value="dnlj"/>
    <property type="match status" value="1"/>
</dbReference>
<dbReference type="NCBIfam" id="NF005932">
    <property type="entry name" value="PRK07956.1"/>
    <property type="match status" value="1"/>
</dbReference>
<dbReference type="PANTHER" id="PTHR23389">
    <property type="entry name" value="CHROMOSOME TRANSMISSION FIDELITY FACTOR 18"/>
    <property type="match status" value="1"/>
</dbReference>
<dbReference type="PANTHER" id="PTHR23389:SF9">
    <property type="entry name" value="DNA LIGASE"/>
    <property type="match status" value="1"/>
</dbReference>
<dbReference type="Pfam" id="PF00533">
    <property type="entry name" value="BRCT"/>
    <property type="match status" value="1"/>
</dbReference>
<dbReference type="Pfam" id="PF01653">
    <property type="entry name" value="DNA_ligase_aden"/>
    <property type="match status" value="1"/>
</dbReference>
<dbReference type="Pfam" id="PF03120">
    <property type="entry name" value="DNA_ligase_OB"/>
    <property type="match status" value="1"/>
</dbReference>
<dbReference type="Pfam" id="PF03119">
    <property type="entry name" value="DNA_ligase_ZBD"/>
    <property type="match status" value="1"/>
</dbReference>
<dbReference type="Pfam" id="PF12826">
    <property type="entry name" value="HHH_2"/>
    <property type="match status" value="1"/>
</dbReference>
<dbReference type="PIRSF" id="PIRSF001604">
    <property type="entry name" value="LigA"/>
    <property type="match status" value="1"/>
</dbReference>
<dbReference type="SMART" id="SM00532">
    <property type="entry name" value="LIGANc"/>
    <property type="match status" value="1"/>
</dbReference>
<dbReference type="SUPFAM" id="SSF52113">
    <property type="entry name" value="BRCT domain"/>
    <property type="match status" value="1"/>
</dbReference>
<dbReference type="SUPFAM" id="SSF56091">
    <property type="entry name" value="DNA ligase/mRNA capping enzyme, catalytic domain"/>
    <property type="match status" value="1"/>
</dbReference>
<dbReference type="SUPFAM" id="SSF50249">
    <property type="entry name" value="Nucleic acid-binding proteins"/>
    <property type="match status" value="1"/>
</dbReference>
<dbReference type="SUPFAM" id="SSF47781">
    <property type="entry name" value="RuvA domain 2-like"/>
    <property type="match status" value="1"/>
</dbReference>
<keyword id="KW-0227">DNA damage</keyword>
<keyword id="KW-0234">DNA repair</keyword>
<keyword id="KW-0235">DNA replication</keyword>
<keyword id="KW-0436">Ligase</keyword>
<keyword id="KW-0460">Magnesium</keyword>
<keyword id="KW-0464">Manganese</keyword>
<keyword id="KW-0479">Metal-binding</keyword>
<keyword id="KW-0520">NAD</keyword>
<keyword id="KW-0862">Zinc</keyword>
<accession>B1AIB0</accession>
<organism>
    <name type="scientific">Ureaplasma parvum serovar 3 (strain ATCC 27815 / 27 / NCTC 11736)</name>
    <dbReference type="NCBI Taxonomy" id="505682"/>
    <lineage>
        <taxon>Bacteria</taxon>
        <taxon>Bacillati</taxon>
        <taxon>Mycoplasmatota</taxon>
        <taxon>Mycoplasmoidales</taxon>
        <taxon>Mycoplasmoidaceae</taxon>
        <taxon>Ureaplasma</taxon>
    </lineage>
</organism>
<proteinExistence type="inferred from homology"/>
<reference key="1">
    <citation type="submission" date="2008-02" db="EMBL/GenBank/DDBJ databases">
        <title>Genome sequence of Ureaplasma parvum serovar 3.</title>
        <authorList>
            <person name="Methe B.A."/>
            <person name="Glass J."/>
            <person name="Waites K."/>
            <person name="Shrivastava S."/>
        </authorList>
    </citation>
    <scope>NUCLEOTIDE SEQUENCE [LARGE SCALE GENOMIC DNA]</scope>
    <source>
        <strain>ATCC 27815 / 27 / NCTC 11736</strain>
    </source>
</reference>
<protein>
    <recommendedName>
        <fullName evidence="1">DNA ligase</fullName>
        <ecNumber evidence="1">6.5.1.2</ecNumber>
    </recommendedName>
    <alternativeName>
        <fullName evidence="1">Polydeoxyribonucleotide synthase [NAD(+)]</fullName>
    </alternativeName>
</protein>